<comment type="function">
    <text evidence="1">Forms a portal in the viral capsid through which viral DNA is translocated during DNA packaging. Assembles as a dodecamer at a single fivefold axe of the T=16 icosahedric capsid. Binds to the molecular motor that translocates the viral DNA, termed terminase.</text>
</comment>
<comment type="subunit">
    <text evidence="1">Homododecamerizes. Interacts with terminase subunits TRM1 and TRM3.</text>
</comment>
<comment type="subcellular location">
    <subcellularLocation>
        <location evidence="1">Virion</location>
    </subcellularLocation>
    <subcellularLocation>
        <location evidence="1">Host nucleus</location>
    </subcellularLocation>
</comment>
<comment type="similarity">
    <text evidence="1">Belongs to the herpesviridae portal protein family.</text>
</comment>
<proteinExistence type="inferred from homology"/>
<evidence type="ECO:0000255" key="1">
    <source>
        <dbReference type="HAMAP-Rule" id="MF_04012"/>
    </source>
</evidence>
<evidence type="ECO:0000256" key="2">
    <source>
        <dbReference type="SAM" id="MobiDB-lite"/>
    </source>
</evidence>
<name>PORTL_VZVD</name>
<organismHost>
    <name type="scientific">Homo sapiens</name>
    <name type="common">Human</name>
    <dbReference type="NCBI Taxonomy" id="9606"/>
</organismHost>
<organism>
    <name type="scientific">Varicella-zoster virus (strain Dumas)</name>
    <name type="common">HHV-3</name>
    <name type="synonym">Human herpesvirus 3</name>
    <dbReference type="NCBI Taxonomy" id="10338"/>
    <lineage>
        <taxon>Viruses</taxon>
        <taxon>Duplodnaviria</taxon>
        <taxon>Heunggongvirae</taxon>
        <taxon>Peploviricota</taxon>
        <taxon>Herviviricetes</taxon>
        <taxon>Herpesvirales</taxon>
        <taxon>Orthoherpesviridae</taxon>
        <taxon>Alphaherpesvirinae</taxon>
        <taxon>Varicellovirus</taxon>
        <taxon>Varicellovirus humanalpha3</taxon>
        <taxon>Human herpesvirus 3</taxon>
    </lineage>
</organism>
<accession>P09302</accession>
<keyword id="KW-1015">Disulfide bond</keyword>
<keyword id="KW-1048">Host nucleus</keyword>
<keyword id="KW-1185">Reference proteome</keyword>
<keyword id="KW-0231">Viral genome packaging</keyword>
<keyword id="KW-1188">Viral release from host cell</keyword>
<keyword id="KW-0946">Virion</keyword>
<protein>
    <recommendedName>
        <fullName evidence="1">Portal protein</fullName>
    </recommendedName>
</protein>
<dbReference type="EMBL" id="X04370">
    <property type="protein sequence ID" value="CAA27937.1"/>
    <property type="molecule type" value="Genomic_DNA"/>
</dbReference>
<dbReference type="PIR" id="B27215">
    <property type="entry name" value="WZBE54"/>
</dbReference>
<dbReference type="Proteomes" id="UP000002602">
    <property type="component" value="Genome"/>
</dbReference>
<dbReference type="GO" id="GO:0042025">
    <property type="term" value="C:host cell nucleus"/>
    <property type="evidence" value="ECO:0007669"/>
    <property type="project" value="UniProtKB-SubCell"/>
</dbReference>
<dbReference type="GO" id="GO:0044423">
    <property type="term" value="C:virion component"/>
    <property type="evidence" value="ECO:0007669"/>
    <property type="project" value="UniProtKB-KW"/>
</dbReference>
<dbReference type="GO" id="GO:0051276">
    <property type="term" value="P:chromosome organization"/>
    <property type="evidence" value="ECO:0007669"/>
    <property type="project" value="InterPro"/>
</dbReference>
<dbReference type="HAMAP" id="MF_04012">
    <property type="entry name" value="HSV_PORTL"/>
    <property type="match status" value="1"/>
</dbReference>
<dbReference type="InterPro" id="IPR002660">
    <property type="entry name" value="Herpes_Portal"/>
</dbReference>
<dbReference type="Pfam" id="PF01763">
    <property type="entry name" value="Herpes_UL6"/>
    <property type="match status" value="1"/>
</dbReference>
<feature type="chain" id="PRO_0000115910" description="Portal protein">
    <location>
        <begin position="1"/>
        <end position="769"/>
    </location>
</feature>
<feature type="region of interest" description="Putative leucine zipper motif" evidence="1">
    <location>
        <begin position="458"/>
        <end position="479"/>
    </location>
</feature>
<feature type="region of interest" description="Disordered" evidence="2">
    <location>
        <begin position="654"/>
        <end position="675"/>
    </location>
</feature>
<feature type="region of interest" description="Disordered" evidence="2">
    <location>
        <begin position="750"/>
        <end position="769"/>
    </location>
</feature>
<feature type="compositionally biased region" description="Basic and acidic residues" evidence="2">
    <location>
        <begin position="760"/>
        <end position="769"/>
    </location>
</feature>
<feature type="disulfide bond" description="Interchain" evidence="1">
    <location>
        <position position="203"/>
    </location>
</feature>
<feature type="disulfide bond" description="Interchain" evidence="1">
    <location>
        <position position="294"/>
    </location>
</feature>
<gene>
    <name type="primary">54</name>
</gene>
<sequence length="769" mass="86780">MAEITSLFNNSSGSEEKRIASSVSIDQGLNGSNPNDQYKNMFDIYWNEYAPDIGFCTFPEEDGWMLIHPTTQSMLFRKILAGDFGYTDGQGIYSAVRSTETVIRQVQATVLMNALDATRYEDLAADWEHHIQQCNLHAGALAERYGLCGESEAVRLAHQVFETWRQTLQSSLLEFLRGITGCLYTSGLNGRVGFAKYVDWIACVGIVPVVRKVRSEQNGTPAPLNTYMGQAAELSQMLKVADATLARGAAVVTSLVECMQNVAIMDYDRTRLYYNYNRRLIMAKDDVTGMKGECLVVWPPVVCGEGVVFDSPLQRLSGEVLACYALREHARVCQVLNTAPLRVLIGRRNEDDRSHSTRAVDRIMGENDTTRAGSAASRLVKLIVNLKNMRHVGDITETVRSYLEETGNHILEGSGSVDTSQPGFGKANQSFNGGAMSGTTNVQSAFKTSVVNSINGMLEGYVNNLFKTIEGLKDVNSDLTERLQFKEGELKRLREERVKIKPSKGSHITMAEETRIADLNHEVIDLTGIIGDDAYIANSFQSRYIPPYGDDIKRLSELWKQELVRCFKLHRVNNNQGQEISVSYSNASISLLVAPYFSFILRATRLGFLVTQSEVHRSEEELCQAIFKKARTESYLSQIRILYEMQVRAEVIKRGPRRTPSPSWGLPDPTEDDERIPEPNKINNQYMHVGYKNLSHFMKGHPPERLRVHKVNAADSTLLDKIRANRRRGDGRWDVRNKYTQHFRLQRNDRQLTNTSRRGVGCERRDRRS</sequence>
<reference key="1">
    <citation type="journal article" date="1986" name="J. Gen. Virol.">
        <title>The complete DNA sequence of varicella-zoster virus.</title>
        <authorList>
            <person name="Davison A.J."/>
            <person name="Scott J.E."/>
        </authorList>
    </citation>
    <scope>NUCLEOTIDE SEQUENCE [LARGE SCALE GENOMIC DNA]</scope>
</reference>